<evidence type="ECO:0000255" key="1">
    <source>
        <dbReference type="HAMAP-Rule" id="MF_00076"/>
    </source>
</evidence>
<accession>Q1QRX4</accession>
<name>HIS7_NITHX</name>
<feature type="chain" id="PRO_1000010310" description="Imidazoleglycerol-phosphate dehydratase">
    <location>
        <begin position="1"/>
        <end position="197"/>
    </location>
</feature>
<comment type="catalytic activity">
    <reaction evidence="1">
        <text>D-erythro-1-(imidazol-4-yl)glycerol 3-phosphate = 3-(imidazol-4-yl)-2-oxopropyl phosphate + H2O</text>
        <dbReference type="Rhea" id="RHEA:11040"/>
        <dbReference type="ChEBI" id="CHEBI:15377"/>
        <dbReference type="ChEBI" id="CHEBI:57766"/>
        <dbReference type="ChEBI" id="CHEBI:58278"/>
        <dbReference type="EC" id="4.2.1.19"/>
    </reaction>
</comment>
<comment type="pathway">
    <text evidence="1">Amino-acid biosynthesis; L-histidine biosynthesis; L-histidine from 5-phospho-alpha-D-ribose 1-diphosphate: step 6/9.</text>
</comment>
<comment type="subcellular location">
    <subcellularLocation>
        <location evidence="1">Cytoplasm</location>
    </subcellularLocation>
</comment>
<comment type="similarity">
    <text evidence="1">Belongs to the imidazoleglycerol-phosphate dehydratase family.</text>
</comment>
<organism>
    <name type="scientific">Nitrobacter hamburgensis (strain DSM 10229 / NCIMB 13809 / X14)</name>
    <dbReference type="NCBI Taxonomy" id="323097"/>
    <lineage>
        <taxon>Bacteria</taxon>
        <taxon>Pseudomonadati</taxon>
        <taxon>Pseudomonadota</taxon>
        <taxon>Alphaproteobacteria</taxon>
        <taxon>Hyphomicrobiales</taxon>
        <taxon>Nitrobacteraceae</taxon>
        <taxon>Nitrobacter</taxon>
    </lineage>
</organism>
<sequence>MRTATIKRKTKETDIEVAVNLDGSGVSSVATGIGFFDHMLDLLARHSRIDIMVKADGDLHVDYHHTTEDVGIALGQAVKQALGTMAGITRYACAHMPMDETLSRVVIDISGRPMLVFKVEFPRDKIGEFDTELVREWFNAFAVNAGVTLHVETLYGENSHHIAESCFKGLARALRAAVAIDPRAAGEVPSTKGQLGG</sequence>
<keyword id="KW-0028">Amino-acid biosynthesis</keyword>
<keyword id="KW-0963">Cytoplasm</keyword>
<keyword id="KW-0368">Histidine biosynthesis</keyword>
<keyword id="KW-0456">Lyase</keyword>
<keyword id="KW-1185">Reference proteome</keyword>
<gene>
    <name evidence="1" type="primary">hisB</name>
    <name type="ordered locus">Nham_0122</name>
</gene>
<dbReference type="EC" id="4.2.1.19" evidence="1"/>
<dbReference type="EMBL" id="CP000319">
    <property type="protein sequence ID" value="ABE61023.1"/>
    <property type="molecule type" value="Genomic_DNA"/>
</dbReference>
<dbReference type="RefSeq" id="WP_011508730.1">
    <property type="nucleotide sequence ID" value="NC_007964.1"/>
</dbReference>
<dbReference type="SMR" id="Q1QRX4"/>
<dbReference type="STRING" id="323097.Nham_0122"/>
<dbReference type="KEGG" id="nha:Nham_0122"/>
<dbReference type="eggNOG" id="COG0131">
    <property type="taxonomic scope" value="Bacteria"/>
</dbReference>
<dbReference type="HOGENOM" id="CLU_044308_3_0_5"/>
<dbReference type="OrthoDB" id="9813612at2"/>
<dbReference type="UniPathway" id="UPA00031">
    <property type="reaction ID" value="UER00011"/>
</dbReference>
<dbReference type="Proteomes" id="UP000001953">
    <property type="component" value="Chromosome"/>
</dbReference>
<dbReference type="GO" id="GO:0005737">
    <property type="term" value="C:cytoplasm"/>
    <property type="evidence" value="ECO:0007669"/>
    <property type="project" value="UniProtKB-SubCell"/>
</dbReference>
<dbReference type="GO" id="GO:0004424">
    <property type="term" value="F:imidazoleglycerol-phosphate dehydratase activity"/>
    <property type="evidence" value="ECO:0007669"/>
    <property type="project" value="UniProtKB-UniRule"/>
</dbReference>
<dbReference type="GO" id="GO:0000105">
    <property type="term" value="P:L-histidine biosynthetic process"/>
    <property type="evidence" value="ECO:0007669"/>
    <property type="project" value="UniProtKB-UniRule"/>
</dbReference>
<dbReference type="CDD" id="cd07914">
    <property type="entry name" value="IGPD"/>
    <property type="match status" value="1"/>
</dbReference>
<dbReference type="FunFam" id="3.30.230.40:FF:000001">
    <property type="entry name" value="Imidazoleglycerol-phosphate dehydratase HisB"/>
    <property type="match status" value="1"/>
</dbReference>
<dbReference type="FunFam" id="3.30.230.40:FF:000003">
    <property type="entry name" value="Imidazoleglycerol-phosphate dehydratase HisB"/>
    <property type="match status" value="1"/>
</dbReference>
<dbReference type="Gene3D" id="3.30.230.40">
    <property type="entry name" value="Imidazole glycerol phosphate dehydratase, domain 1"/>
    <property type="match status" value="2"/>
</dbReference>
<dbReference type="HAMAP" id="MF_00076">
    <property type="entry name" value="HisB"/>
    <property type="match status" value="1"/>
</dbReference>
<dbReference type="InterPro" id="IPR038494">
    <property type="entry name" value="IGPD_sf"/>
</dbReference>
<dbReference type="InterPro" id="IPR000807">
    <property type="entry name" value="ImidazoleglycerolP_deHydtase"/>
</dbReference>
<dbReference type="InterPro" id="IPR020565">
    <property type="entry name" value="ImidazoleglycerP_deHydtase_CS"/>
</dbReference>
<dbReference type="InterPro" id="IPR020568">
    <property type="entry name" value="Ribosomal_Su5_D2-typ_SF"/>
</dbReference>
<dbReference type="NCBIfam" id="NF002109">
    <property type="entry name" value="PRK00951.1-5"/>
    <property type="match status" value="1"/>
</dbReference>
<dbReference type="NCBIfam" id="NF002111">
    <property type="entry name" value="PRK00951.2-1"/>
    <property type="match status" value="1"/>
</dbReference>
<dbReference type="NCBIfam" id="NF002114">
    <property type="entry name" value="PRK00951.2-4"/>
    <property type="match status" value="1"/>
</dbReference>
<dbReference type="PANTHER" id="PTHR23133:SF2">
    <property type="entry name" value="IMIDAZOLEGLYCEROL-PHOSPHATE DEHYDRATASE"/>
    <property type="match status" value="1"/>
</dbReference>
<dbReference type="PANTHER" id="PTHR23133">
    <property type="entry name" value="IMIDAZOLEGLYCEROL-PHOSPHATE DEHYDRATASE HIS7"/>
    <property type="match status" value="1"/>
</dbReference>
<dbReference type="Pfam" id="PF00475">
    <property type="entry name" value="IGPD"/>
    <property type="match status" value="1"/>
</dbReference>
<dbReference type="SUPFAM" id="SSF54211">
    <property type="entry name" value="Ribosomal protein S5 domain 2-like"/>
    <property type="match status" value="2"/>
</dbReference>
<dbReference type="PROSITE" id="PS00954">
    <property type="entry name" value="IGP_DEHYDRATASE_1"/>
    <property type="match status" value="1"/>
</dbReference>
<dbReference type="PROSITE" id="PS00955">
    <property type="entry name" value="IGP_DEHYDRATASE_2"/>
    <property type="match status" value="1"/>
</dbReference>
<protein>
    <recommendedName>
        <fullName evidence="1">Imidazoleglycerol-phosphate dehydratase</fullName>
        <shortName evidence="1">IGPD</shortName>
        <ecNumber evidence="1">4.2.1.19</ecNumber>
    </recommendedName>
</protein>
<proteinExistence type="inferred from homology"/>
<reference key="1">
    <citation type="submission" date="2006-03" db="EMBL/GenBank/DDBJ databases">
        <title>Complete sequence of chromosome of Nitrobacter hamburgensis X14.</title>
        <authorList>
            <consortium name="US DOE Joint Genome Institute"/>
            <person name="Copeland A."/>
            <person name="Lucas S."/>
            <person name="Lapidus A."/>
            <person name="Barry K."/>
            <person name="Detter J.C."/>
            <person name="Glavina del Rio T."/>
            <person name="Hammon N."/>
            <person name="Israni S."/>
            <person name="Dalin E."/>
            <person name="Tice H."/>
            <person name="Pitluck S."/>
            <person name="Chain P."/>
            <person name="Malfatti S."/>
            <person name="Shin M."/>
            <person name="Vergez L."/>
            <person name="Schmutz J."/>
            <person name="Larimer F."/>
            <person name="Land M."/>
            <person name="Hauser L."/>
            <person name="Kyrpides N."/>
            <person name="Ivanova N."/>
            <person name="Ward B."/>
            <person name="Arp D."/>
            <person name="Klotz M."/>
            <person name="Stein L."/>
            <person name="O'Mullan G."/>
            <person name="Starkenburg S."/>
            <person name="Sayavedra L."/>
            <person name="Poret-Peterson A.T."/>
            <person name="Gentry M.E."/>
            <person name="Bruce D."/>
            <person name="Richardson P."/>
        </authorList>
    </citation>
    <scope>NUCLEOTIDE SEQUENCE [LARGE SCALE GENOMIC DNA]</scope>
    <source>
        <strain>DSM 10229 / NCIMB 13809 / X14</strain>
    </source>
</reference>